<gene>
    <name evidence="1" type="primary">azoR</name>
    <name type="ordered locus">SAS0187</name>
</gene>
<accession>Q6GCR4</accession>
<organism>
    <name type="scientific">Staphylococcus aureus (strain MSSA476)</name>
    <dbReference type="NCBI Taxonomy" id="282459"/>
    <lineage>
        <taxon>Bacteria</taxon>
        <taxon>Bacillati</taxon>
        <taxon>Bacillota</taxon>
        <taxon>Bacilli</taxon>
        <taxon>Bacillales</taxon>
        <taxon>Staphylococcaceae</taxon>
        <taxon>Staphylococcus</taxon>
    </lineage>
</organism>
<dbReference type="EC" id="1.6.5.-" evidence="1"/>
<dbReference type="EC" id="1.7.1.17" evidence="1"/>
<dbReference type="EMBL" id="BX571857">
    <property type="protein sequence ID" value="CAG41955.1"/>
    <property type="molecule type" value="Genomic_DNA"/>
</dbReference>
<dbReference type="RefSeq" id="WP_001151450.1">
    <property type="nucleotide sequence ID" value="NC_002953.3"/>
</dbReference>
<dbReference type="SMR" id="Q6GCR4"/>
<dbReference type="KEGG" id="sas:SAS0187"/>
<dbReference type="HOGENOM" id="CLU_088964_3_1_9"/>
<dbReference type="GO" id="GO:0009055">
    <property type="term" value="F:electron transfer activity"/>
    <property type="evidence" value="ECO:0007669"/>
    <property type="project" value="UniProtKB-UniRule"/>
</dbReference>
<dbReference type="GO" id="GO:0010181">
    <property type="term" value="F:FMN binding"/>
    <property type="evidence" value="ECO:0007669"/>
    <property type="project" value="UniProtKB-UniRule"/>
</dbReference>
<dbReference type="GO" id="GO:0016652">
    <property type="term" value="F:oxidoreductase activity, acting on NAD(P)H as acceptor"/>
    <property type="evidence" value="ECO:0007669"/>
    <property type="project" value="UniProtKB-UniRule"/>
</dbReference>
<dbReference type="GO" id="GO:0016655">
    <property type="term" value="F:oxidoreductase activity, acting on NAD(P)H, quinone or similar compound as acceptor"/>
    <property type="evidence" value="ECO:0007669"/>
    <property type="project" value="InterPro"/>
</dbReference>
<dbReference type="Gene3D" id="3.40.50.360">
    <property type="match status" value="1"/>
</dbReference>
<dbReference type="HAMAP" id="MF_01216">
    <property type="entry name" value="Azoreductase_type1"/>
    <property type="match status" value="1"/>
</dbReference>
<dbReference type="InterPro" id="IPR003680">
    <property type="entry name" value="Flavodoxin_fold"/>
</dbReference>
<dbReference type="InterPro" id="IPR029039">
    <property type="entry name" value="Flavoprotein-like_sf"/>
</dbReference>
<dbReference type="InterPro" id="IPR050104">
    <property type="entry name" value="FMN-dep_NADH:Q_OxRdtase_AzoR1"/>
</dbReference>
<dbReference type="InterPro" id="IPR023048">
    <property type="entry name" value="NADH:quinone_OxRdtase_FMN_depd"/>
</dbReference>
<dbReference type="NCBIfam" id="NF010075">
    <property type="entry name" value="PRK13556.1"/>
    <property type="match status" value="1"/>
</dbReference>
<dbReference type="PANTHER" id="PTHR43741">
    <property type="entry name" value="FMN-DEPENDENT NADH-AZOREDUCTASE 1"/>
    <property type="match status" value="1"/>
</dbReference>
<dbReference type="PANTHER" id="PTHR43741:SF7">
    <property type="entry name" value="FMN-DEPENDENT NADH:QUINONE OXIDOREDUCTASE"/>
    <property type="match status" value="1"/>
</dbReference>
<dbReference type="Pfam" id="PF02525">
    <property type="entry name" value="Flavodoxin_2"/>
    <property type="match status" value="1"/>
</dbReference>
<dbReference type="SUPFAM" id="SSF52218">
    <property type="entry name" value="Flavoproteins"/>
    <property type="match status" value="1"/>
</dbReference>
<protein>
    <recommendedName>
        <fullName evidence="1">FMN-dependent NADH:quinone oxidoreductase</fullName>
        <ecNumber evidence="1">1.6.5.-</ecNumber>
    </recommendedName>
    <alternativeName>
        <fullName evidence="1">Azo-dye reductase</fullName>
    </alternativeName>
    <alternativeName>
        <fullName evidence="1">FMN-dependent NADH-azo compound oxidoreductase</fullName>
    </alternativeName>
    <alternativeName>
        <fullName evidence="1">FMN-dependent NADH-azoreductase</fullName>
        <ecNumber evidence="1">1.7.1.17</ecNumber>
    </alternativeName>
</protein>
<evidence type="ECO:0000255" key="1">
    <source>
        <dbReference type="HAMAP-Rule" id="MF_01216"/>
    </source>
</evidence>
<reference key="1">
    <citation type="journal article" date="2004" name="Proc. Natl. Acad. Sci. U.S.A.">
        <title>Complete genomes of two clinical Staphylococcus aureus strains: evidence for the rapid evolution of virulence and drug resistance.</title>
        <authorList>
            <person name="Holden M.T.G."/>
            <person name="Feil E.J."/>
            <person name="Lindsay J.A."/>
            <person name="Peacock S.J."/>
            <person name="Day N.P.J."/>
            <person name="Enright M.C."/>
            <person name="Foster T.J."/>
            <person name="Moore C.E."/>
            <person name="Hurst L."/>
            <person name="Atkin R."/>
            <person name="Barron A."/>
            <person name="Bason N."/>
            <person name="Bentley S.D."/>
            <person name="Chillingworth C."/>
            <person name="Chillingworth T."/>
            <person name="Churcher C."/>
            <person name="Clark L."/>
            <person name="Corton C."/>
            <person name="Cronin A."/>
            <person name="Doggett J."/>
            <person name="Dowd L."/>
            <person name="Feltwell T."/>
            <person name="Hance Z."/>
            <person name="Harris B."/>
            <person name="Hauser H."/>
            <person name="Holroyd S."/>
            <person name="Jagels K."/>
            <person name="James K.D."/>
            <person name="Lennard N."/>
            <person name="Line A."/>
            <person name="Mayes R."/>
            <person name="Moule S."/>
            <person name="Mungall K."/>
            <person name="Ormond D."/>
            <person name="Quail M.A."/>
            <person name="Rabbinowitsch E."/>
            <person name="Rutherford K.M."/>
            <person name="Sanders M."/>
            <person name="Sharp S."/>
            <person name="Simmonds M."/>
            <person name="Stevens K."/>
            <person name="Whitehead S."/>
            <person name="Barrell B.G."/>
            <person name="Spratt B.G."/>
            <person name="Parkhill J."/>
        </authorList>
    </citation>
    <scope>NUCLEOTIDE SEQUENCE [LARGE SCALE GENOMIC DNA]</scope>
    <source>
        <strain>MSSA476</strain>
    </source>
</reference>
<proteinExistence type="inferred from homology"/>
<feature type="chain" id="PRO_0000166357" description="FMN-dependent NADH:quinone oxidoreductase">
    <location>
        <begin position="1"/>
        <end position="208"/>
    </location>
</feature>
<feature type="binding site" evidence="1">
    <location>
        <begin position="17"/>
        <end position="19"/>
    </location>
    <ligand>
        <name>FMN</name>
        <dbReference type="ChEBI" id="CHEBI:58210"/>
    </ligand>
</feature>
<feature type="binding site" evidence="1">
    <location>
        <begin position="99"/>
        <end position="102"/>
    </location>
    <ligand>
        <name>FMN</name>
        <dbReference type="ChEBI" id="CHEBI:58210"/>
    </ligand>
</feature>
<feature type="binding site" evidence="1">
    <location>
        <begin position="143"/>
        <end position="146"/>
    </location>
    <ligand>
        <name>FMN</name>
        <dbReference type="ChEBI" id="CHEBI:58210"/>
    </ligand>
</feature>
<keyword id="KW-0285">Flavoprotein</keyword>
<keyword id="KW-0288">FMN</keyword>
<keyword id="KW-0520">NAD</keyword>
<keyword id="KW-0560">Oxidoreductase</keyword>
<name>AZOR_STAAS</name>
<sequence length="208" mass="23365">MAKVLYITAHPFNELVSNSMAAGKAFIETYQQQHPDDEVKHIDLFETYIPVIDKDVLTGWGKMSNGETLTDDEQMKVSRLSDILEEFLSADKYVFVTPMWNLSFPPVVKAYIDAISIAGKTFKYSAEGPQGLLTDKKVLHIQSRGGYYTEGPAADFEMGDRYLRTIMTFLGVPSYETIIIEGHNAEPHKTEEIKATSINNAEKLATIF</sequence>
<comment type="function">
    <text evidence="1">Quinone reductase that provides resistance to thiol-specific stress caused by electrophilic quinones.</text>
</comment>
<comment type="function">
    <text evidence="1">Also exhibits azoreductase activity. Catalyzes the reductive cleavage of the azo bond in aromatic azo compounds to the corresponding amines.</text>
</comment>
<comment type="catalytic activity">
    <reaction evidence="1">
        <text>2 a quinone + NADH + H(+) = 2 a 1,4-benzosemiquinone + NAD(+)</text>
        <dbReference type="Rhea" id="RHEA:65952"/>
        <dbReference type="ChEBI" id="CHEBI:15378"/>
        <dbReference type="ChEBI" id="CHEBI:57540"/>
        <dbReference type="ChEBI" id="CHEBI:57945"/>
        <dbReference type="ChEBI" id="CHEBI:132124"/>
        <dbReference type="ChEBI" id="CHEBI:134225"/>
    </reaction>
</comment>
<comment type="catalytic activity">
    <reaction evidence="1">
        <text>N,N-dimethyl-1,4-phenylenediamine + anthranilate + 2 NAD(+) = 2-(4-dimethylaminophenyl)diazenylbenzoate + 2 NADH + 2 H(+)</text>
        <dbReference type="Rhea" id="RHEA:55872"/>
        <dbReference type="ChEBI" id="CHEBI:15378"/>
        <dbReference type="ChEBI" id="CHEBI:15783"/>
        <dbReference type="ChEBI" id="CHEBI:16567"/>
        <dbReference type="ChEBI" id="CHEBI:57540"/>
        <dbReference type="ChEBI" id="CHEBI:57945"/>
        <dbReference type="ChEBI" id="CHEBI:71579"/>
        <dbReference type="EC" id="1.7.1.17"/>
    </reaction>
</comment>
<comment type="cofactor">
    <cofactor evidence="1">
        <name>FMN</name>
        <dbReference type="ChEBI" id="CHEBI:58210"/>
    </cofactor>
    <text evidence="1">Binds 1 FMN per subunit.</text>
</comment>
<comment type="subunit">
    <text evidence="1">Homodimer.</text>
</comment>
<comment type="similarity">
    <text evidence="1">Belongs to the azoreductase type 1 family.</text>
</comment>